<evidence type="ECO:0000250" key="1"/>
<evidence type="ECO:0000255" key="2"/>
<evidence type="ECO:0000305" key="3"/>
<organism>
    <name type="scientific">Raphanus sativus</name>
    <name type="common">Radish</name>
    <name type="synonym">Raphanus raphanistrum var. sativus</name>
    <dbReference type="NCBI Taxonomy" id="3726"/>
    <lineage>
        <taxon>Eukaryota</taxon>
        <taxon>Viridiplantae</taxon>
        <taxon>Streptophyta</taxon>
        <taxon>Embryophyta</taxon>
        <taxon>Tracheophyta</taxon>
        <taxon>Spermatophyta</taxon>
        <taxon>Magnoliopsida</taxon>
        <taxon>eudicotyledons</taxon>
        <taxon>Gunneridae</taxon>
        <taxon>Pentapetalae</taxon>
        <taxon>rosids</taxon>
        <taxon>malvids</taxon>
        <taxon>Brassicales</taxon>
        <taxon>Brassicaceae</taxon>
        <taxon>Brassiceae</taxon>
        <taxon>Raphanus</taxon>
    </lineage>
</organism>
<keyword id="KW-0066">ATP synthesis</keyword>
<keyword id="KW-0067">ATP-binding</keyword>
<keyword id="KW-0138">CF(0)</keyword>
<keyword id="KW-0375">Hydrogen ion transport</keyword>
<keyword id="KW-0406">Ion transport</keyword>
<keyword id="KW-0472">Membrane</keyword>
<keyword id="KW-0496">Mitochondrion</keyword>
<keyword id="KW-0547">Nucleotide-binding</keyword>
<keyword id="KW-1185">Reference proteome</keyword>
<keyword id="KW-1278">Translocase</keyword>
<keyword id="KW-0812">Transmembrane</keyword>
<keyword id="KW-1133">Transmembrane helix</keyword>
<keyword id="KW-0813">Transport</keyword>
<geneLocation type="mitochondrion"/>
<accession>Q06564</accession>
<comment type="function">
    <text evidence="1">This is one of the chains of the nonenzymatic component (CF(0) subunit) of the mitochondrial ATPase complex.</text>
</comment>
<comment type="catalytic activity">
    <reaction>
        <text>ATP + H2O + 4 H(+)(in) = ADP + phosphate + 5 H(+)(out)</text>
        <dbReference type="Rhea" id="RHEA:57720"/>
        <dbReference type="ChEBI" id="CHEBI:15377"/>
        <dbReference type="ChEBI" id="CHEBI:15378"/>
        <dbReference type="ChEBI" id="CHEBI:30616"/>
        <dbReference type="ChEBI" id="CHEBI:43474"/>
        <dbReference type="ChEBI" id="CHEBI:456216"/>
        <dbReference type="EC" id="7.1.2.2"/>
    </reaction>
</comment>
<comment type="subunit">
    <text evidence="1">F-type ATPases have 2 components, CF(1) - the catalytic core - and CF(0) - the membrane proton channel. CF(1) has five subunits: alpha(3), beta(3), gamma(1), delta(1), epsilon(1). CF(0) has three main subunits: a, b and c (By similarity).</text>
</comment>
<comment type="subcellular location">
    <subcellularLocation>
        <location evidence="1">Mitochondrion membrane</location>
        <topology evidence="1">Single-pass membrane protein</topology>
    </subcellularLocation>
</comment>
<comment type="similarity">
    <text evidence="3">Belongs to the ATPase protein YMF19 family.</text>
</comment>
<reference key="1">
    <citation type="journal article" date="1993" name="Curr. Genet.">
        <title>Characterization of the radish mitochondrial orfB locus: possible relationship with male sterility in Ogura radish.</title>
        <authorList>
            <person name="Krishnasamy S."/>
            <person name="Makaroff C.A."/>
        </authorList>
    </citation>
    <scope>NUCLEOTIDE SEQUENCE [GENOMIC DNA]</scope>
    <source>
        <strain>cv. Scarlet Knight</strain>
        <tissue>Green leaf</tissue>
    </source>
</reference>
<name>YMF19_RAPSA</name>
<proteinExistence type="inferred from homology"/>
<gene>
    <name type="primary">YMF19</name>
</gene>
<protein>
    <recommendedName>
        <fullName>Putative ATP synthase protein YMF19</fullName>
        <ecNumber>7.1.2.2</ecNumber>
    </recommendedName>
    <alternativeName>
        <fullName>Mitochondrial protein YMF19</fullName>
    </alternativeName>
</protein>
<sequence>MPQLDKFTYFSQFFWLCLFFFTFYIFICNDGDGVLGISRILKLRNQLLSHRGKTIQSKDPNSLEDLLRKGFSTGVSYMYASLFEVSQWCKAVDLLGKRRKITLISCFGEISGSRGMERNILYNISKSSPSNTGRWITCRNCRNDIMLIHAVHGQGSIK</sequence>
<dbReference type="EC" id="7.1.2.2"/>
<dbReference type="EMBL" id="Z18895">
    <property type="protein sequence ID" value="CAA79331.1"/>
    <property type="molecule type" value="Genomic_DNA"/>
</dbReference>
<dbReference type="EMBL" id="Z18896">
    <property type="protein sequence ID" value="CAA79333.1"/>
    <property type="molecule type" value="Genomic_DNA"/>
</dbReference>
<dbReference type="PIR" id="S33916">
    <property type="entry name" value="S33916"/>
</dbReference>
<dbReference type="SMR" id="Q06564"/>
<dbReference type="KEGG" id="rsz:13630173"/>
<dbReference type="OrthoDB" id="1879916at2759"/>
<dbReference type="Proteomes" id="UP000504610">
    <property type="component" value="Unplaced"/>
</dbReference>
<dbReference type="GO" id="GO:0031966">
    <property type="term" value="C:mitochondrial membrane"/>
    <property type="evidence" value="ECO:0007669"/>
    <property type="project" value="UniProtKB-SubCell"/>
</dbReference>
<dbReference type="GO" id="GO:0045259">
    <property type="term" value="C:proton-transporting ATP synthase complex"/>
    <property type="evidence" value="ECO:0007669"/>
    <property type="project" value="UniProtKB-KW"/>
</dbReference>
<dbReference type="GO" id="GO:0005524">
    <property type="term" value="F:ATP binding"/>
    <property type="evidence" value="ECO:0007669"/>
    <property type="project" value="UniProtKB-KW"/>
</dbReference>
<dbReference type="GO" id="GO:0006754">
    <property type="term" value="P:ATP biosynthetic process"/>
    <property type="evidence" value="ECO:0007669"/>
    <property type="project" value="UniProtKB-KW"/>
</dbReference>
<dbReference type="GO" id="GO:1902600">
    <property type="term" value="P:proton transmembrane transport"/>
    <property type="evidence" value="ECO:0007669"/>
    <property type="project" value="UniProtKB-KW"/>
</dbReference>
<dbReference type="InterPro" id="IPR009455">
    <property type="entry name" value="YMF19"/>
</dbReference>
<dbReference type="InterPro" id="IPR044975">
    <property type="entry name" value="YMF19-like"/>
</dbReference>
<dbReference type="InterPro" id="IPR003319">
    <property type="entry name" value="YMF19-like_N"/>
</dbReference>
<dbReference type="PANTHER" id="PTHR36816">
    <property type="entry name" value="ATP SYNTHASE PROTEIN YMF19"/>
    <property type="match status" value="1"/>
</dbReference>
<dbReference type="PANTHER" id="PTHR36816:SF1">
    <property type="entry name" value="ATP SYNTHASE PROTEIN YMF19"/>
    <property type="match status" value="1"/>
</dbReference>
<dbReference type="Pfam" id="PF02326">
    <property type="entry name" value="YMF19"/>
    <property type="match status" value="1"/>
</dbReference>
<dbReference type="Pfam" id="PF06449">
    <property type="entry name" value="YMF19_C"/>
    <property type="match status" value="1"/>
</dbReference>
<feature type="chain" id="PRO_0000196844" description="Putative ATP synthase protein YMF19">
    <location>
        <begin position="1"/>
        <end position="158"/>
    </location>
</feature>
<feature type="transmembrane region" description="Helical" evidence="2">
    <location>
        <begin position="7"/>
        <end position="27"/>
    </location>
</feature>
<feature type="sequence variant" description="In Ogura, male-sterile line.">
    <original>I</original>
    <variation>L</variation>
    <location>
        <position position="124"/>
    </location>
</feature>